<protein>
    <recommendedName>
        <fullName>Beta-carotene 3-hydroxylase, chloroplastic</fullName>
        <shortName>OgHYB</shortName>
        <ecNumber evidence="2">1.14.15.24</ecNumber>
    </recommendedName>
    <alternativeName>
        <fullName>Beta-carotene hydroxylase</fullName>
    </alternativeName>
</protein>
<keyword id="KW-0125">Carotenoid biosynthesis</keyword>
<keyword id="KW-0150">Chloroplast</keyword>
<keyword id="KW-0378">Hydrolase</keyword>
<keyword id="KW-0408">Iron</keyword>
<keyword id="KW-0472">Membrane</keyword>
<keyword id="KW-0479">Metal-binding</keyword>
<keyword id="KW-0520">NAD</keyword>
<keyword id="KW-0560">Oxidoreductase</keyword>
<keyword id="KW-0934">Plastid</keyword>
<keyword id="KW-0809">Transit peptide</keyword>
<keyword id="KW-0812">Transmembrane</keyword>
<keyword id="KW-1133">Transmembrane helix</keyword>
<reference key="1">
    <citation type="journal article" date="2010" name="Planta">
        <title>Differential expression of carotenoid-related genes determines diversified carotenoid coloration in floral tissues of Oncidium cultivars.</title>
        <authorList>
            <person name="Chiou C.Y."/>
            <person name="Pan H.A."/>
            <person name="Chuang Y.N."/>
            <person name="Yeh K.W."/>
        </authorList>
    </citation>
    <scope>NUCLEOTIDE SEQUENCE [MRNA]</scope>
    <scope>DEVELOPMENTAL STAGE</scope>
    <scope>TISSUE SPECIFICITY</scope>
</reference>
<sequence>MAFAMSSSLTLFQYQSFGKKPFFSRRRDFAGCSMMNPLVARCNRATEICCVVRKDGEAESLVEAENDQLEEEVMKPTSIDSFSVVLRSERKKAERRTYLVAAMASSLGFTFMAAAAVYYRFAWQMEGGAVPLTEMMGTFSLAVGSAVGMEYWARWAHRALWHTSLWHMHESHHRPRDGPFELNDVFALINAFPAVALLAFGFFHRGFFSGLCFGAGLGITLYGMAYMFVHDGLVHRRFPVGPIATVPYFQWVAAAHQIHHADKFNGVPYGLFLGHKELEEVGGMEALEREIKRGVKVFSSSPNQS</sequence>
<comment type="function">
    <text evidence="2">Nonheme diiron monooxygenase involved in the biosynthesis of xanthophylls. Specific for beta-ring hydroxylations of beta-carotene. Uses ferredoxin as an electron donor.</text>
</comment>
<comment type="catalytic activity">
    <reaction evidence="2">
        <text>all-trans-beta-carotene + 4 reduced [2Fe-2S]-[ferredoxin] + 2 O2 + 4 H(+) = all-trans-zeaxanthin + 4 oxidized [2Fe-2S]-[ferredoxin] + 2 H2O</text>
        <dbReference type="Rhea" id="RHEA:30331"/>
        <dbReference type="Rhea" id="RHEA-COMP:10000"/>
        <dbReference type="Rhea" id="RHEA-COMP:10001"/>
        <dbReference type="ChEBI" id="CHEBI:15377"/>
        <dbReference type="ChEBI" id="CHEBI:15378"/>
        <dbReference type="ChEBI" id="CHEBI:15379"/>
        <dbReference type="ChEBI" id="CHEBI:17579"/>
        <dbReference type="ChEBI" id="CHEBI:27547"/>
        <dbReference type="ChEBI" id="CHEBI:33737"/>
        <dbReference type="ChEBI" id="CHEBI:33738"/>
        <dbReference type="EC" id="1.14.15.24"/>
    </reaction>
</comment>
<comment type="subunit">
    <text evidence="1">Homodimer.</text>
</comment>
<comment type="subcellular location">
    <subcellularLocation>
        <location evidence="5">Plastid</location>
        <location evidence="5">Chloroplast membrane</location>
        <topology evidence="5">Multi-pass membrane protein</topology>
    </subcellularLocation>
</comment>
<comment type="tissue specificity">
    <text evidence="4">Expressed in flower buds and lips. Detected in roots and leaves.</text>
</comment>
<comment type="developmental stage">
    <text evidence="4">Expressed during floral development.</text>
</comment>
<comment type="domain">
    <text evidence="1">The histidine box domains may contain the active site and/or be involved in iron binding.</text>
</comment>
<comment type="miscellaneous">
    <text>High expression of beta-hydroxylase (BHY) and zeaxanthin epoxidase (ZEP) results in the accumulation of violaxanthin, 9-cis-violaxanthin and neoxanthin in the yellow cultivar Gower Ramsey, while the down-regulation of BHY and ZEP results in the accumulation of beta-carotene and orange coloration in floral tissues of the cultivar Sunkist.</text>
</comment>
<comment type="similarity">
    <text evidence="5">Belongs to the sterol desaturase family.</text>
</comment>
<accession>C3VEQ1</accession>
<dbReference type="EC" id="1.14.15.24" evidence="2"/>
<dbReference type="EMBL" id="FJ859991">
    <property type="protein sequence ID" value="ACP27626.1"/>
    <property type="molecule type" value="mRNA"/>
</dbReference>
<dbReference type="GO" id="GO:0031969">
    <property type="term" value="C:chloroplast membrane"/>
    <property type="evidence" value="ECO:0007669"/>
    <property type="project" value="UniProtKB-SubCell"/>
</dbReference>
<dbReference type="GO" id="GO:0010291">
    <property type="term" value="F:beta-carotene 3-hydroxylase activity"/>
    <property type="evidence" value="ECO:0007669"/>
    <property type="project" value="UniProtKB-EC"/>
</dbReference>
<dbReference type="GO" id="GO:0016787">
    <property type="term" value="F:hydrolase activity"/>
    <property type="evidence" value="ECO:0007669"/>
    <property type="project" value="UniProtKB-KW"/>
</dbReference>
<dbReference type="GO" id="GO:0005506">
    <property type="term" value="F:iron ion binding"/>
    <property type="evidence" value="ECO:0007669"/>
    <property type="project" value="InterPro"/>
</dbReference>
<dbReference type="GO" id="GO:0016119">
    <property type="term" value="P:carotene metabolic process"/>
    <property type="evidence" value="ECO:0007669"/>
    <property type="project" value="TreeGrafter"/>
</dbReference>
<dbReference type="GO" id="GO:0016123">
    <property type="term" value="P:xanthophyll biosynthetic process"/>
    <property type="evidence" value="ECO:0007669"/>
    <property type="project" value="TreeGrafter"/>
</dbReference>
<dbReference type="InterPro" id="IPR045019">
    <property type="entry name" value="BETA-OHASE-like"/>
</dbReference>
<dbReference type="InterPro" id="IPR006694">
    <property type="entry name" value="Fatty_acid_hydroxylase"/>
</dbReference>
<dbReference type="PANTHER" id="PTHR31899">
    <property type="entry name" value="BETA-CAROTENE 3-HYDROXYLASE 1, CHLOROPLASTIC"/>
    <property type="match status" value="1"/>
</dbReference>
<dbReference type="PANTHER" id="PTHR31899:SF9">
    <property type="entry name" value="BETA-CAROTENE 3-HYDROXYLASE 1, CHLOROPLASTIC"/>
    <property type="match status" value="1"/>
</dbReference>
<dbReference type="Pfam" id="PF04116">
    <property type="entry name" value="FA_hydroxylase"/>
    <property type="match status" value="1"/>
</dbReference>
<proteinExistence type="evidence at transcript level"/>
<gene>
    <name type="primary">BHY</name>
    <name type="synonym">HYB</name>
</gene>
<name>BCH_ONCHC</name>
<organism>
    <name type="scientific">Oncidium hybrid cultivar</name>
    <name type="common">Orchid</name>
    <dbReference type="NCBI Taxonomy" id="141207"/>
    <lineage>
        <taxon>Eukaryota</taxon>
        <taxon>Viridiplantae</taxon>
        <taxon>Streptophyta</taxon>
        <taxon>Embryophyta</taxon>
        <taxon>Tracheophyta</taxon>
        <taxon>Spermatophyta</taxon>
        <taxon>Magnoliopsida</taxon>
        <taxon>Liliopsida</taxon>
        <taxon>Asparagales</taxon>
        <taxon>Orchidaceae</taxon>
        <taxon>Epidendroideae</taxon>
        <taxon>Cymbidieae</taxon>
        <taxon>Oncidiinae</taxon>
        <taxon>Oncidium</taxon>
    </lineage>
</organism>
<evidence type="ECO:0000250" key="1"/>
<evidence type="ECO:0000250" key="2">
    <source>
        <dbReference type="UniProtKB" id="Q9SZZ8"/>
    </source>
</evidence>
<evidence type="ECO:0000255" key="3"/>
<evidence type="ECO:0000269" key="4">
    <source>
    </source>
</evidence>
<evidence type="ECO:0000305" key="5"/>
<feature type="transit peptide" description="Chloroplast" evidence="3">
    <location>
        <begin position="1"/>
        <end position="41"/>
    </location>
</feature>
<feature type="chain" id="PRO_0000426712" description="Beta-carotene 3-hydroxylase, chloroplastic">
    <location>
        <begin position="42"/>
        <end position="305"/>
    </location>
</feature>
<feature type="transmembrane region" description="Helical" evidence="3">
    <location>
        <begin position="98"/>
        <end position="118"/>
    </location>
</feature>
<feature type="transmembrane region" description="Helical" evidence="3">
    <location>
        <begin position="129"/>
        <end position="149"/>
    </location>
</feature>
<feature type="transmembrane region" description="Helical" evidence="3">
    <location>
        <begin position="184"/>
        <end position="204"/>
    </location>
</feature>
<feature type="transmembrane region" description="Helical" evidence="3">
    <location>
        <begin position="207"/>
        <end position="227"/>
    </location>
</feature>
<feature type="domain" description="Fatty acid hydroxylase" evidence="3">
    <location>
        <begin position="146"/>
        <end position="272"/>
    </location>
</feature>
<feature type="short sequence motif" description="Histidine box-1">
    <location>
        <begin position="157"/>
        <end position="162"/>
    </location>
</feature>
<feature type="short sequence motif" description="Histidine box-2">
    <location>
        <begin position="169"/>
        <end position="173"/>
    </location>
</feature>
<feature type="short sequence motif" description="Histidine box-3">
    <location>
        <begin position="230"/>
        <end position="235"/>
    </location>
</feature>
<feature type="short sequence motif" description="Histidine box-4">
    <location>
        <begin position="256"/>
        <end position="260"/>
    </location>
</feature>